<organism>
    <name type="scientific">Prochlorococcus marinus subsp. pastoris (strain CCMP1986 / NIES-2087 / MED4)</name>
    <dbReference type="NCBI Taxonomy" id="59919"/>
    <lineage>
        <taxon>Bacteria</taxon>
        <taxon>Bacillati</taxon>
        <taxon>Cyanobacteriota</taxon>
        <taxon>Cyanophyceae</taxon>
        <taxon>Synechococcales</taxon>
        <taxon>Prochlorococcaceae</taxon>
        <taxon>Prochlorococcus</taxon>
    </lineage>
</organism>
<dbReference type="EC" id="2.7.1.23" evidence="1"/>
<dbReference type="EMBL" id="BX548174">
    <property type="protein sequence ID" value="CAE18615.1"/>
    <property type="molecule type" value="Genomic_DNA"/>
</dbReference>
<dbReference type="SMR" id="Q7V3C2"/>
<dbReference type="STRING" id="59919.PMM0156"/>
<dbReference type="KEGG" id="pmm:PMM0156"/>
<dbReference type="eggNOG" id="COG0061">
    <property type="taxonomic scope" value="Bacteria"/>
</dbReference>
<dbReference type="HOGENOM" id="CLU_008831_0_1_3"/>
<dbReference type="Proteomes" id="UP000001026">
    <property type="component" value="Chromosome"/>
</dbReference>
<dbReference type="GO" id="GO:0005737">
    <property type="term" value="C:cytoplasm"/>
    <property type="evidence" value="ECO:0007669"/>
    <property type="project" value="UniProtKB-SubCell"/>
</dbReference>
<dbReference type="GO" id="GO:0005524">
    <property type="term" value="F:ATP binding"/>
    <property type="evidence" value="ECO:0007669"/>
    <property type="project" value="UniProtKB-KW"/>
</dbReference>
<dbReference type="GO" id="GO:0046872">
    <property type="term" value="F:metal ion binding"/>
    <property type="evidence" value="ECO:0007669"/>
    <property type="project" value="UniProtKB-UniRule"/>
</dbReference>
<dbReference type="GO" id="GO:0051287">
    <property type="term" value="F:NAD binding"/>
    <property type="evidence" value="ECO:0007669"/>
    <property type="project" value="UniProtKB-ARBA"/>
</dbReference>
<dbReference type="GO" id="GO:0003951">
    <property type="term" value="F:NAD+ kinase activity"/>
    <property type="evidence" value="ECO:0007669"/>
    <property type="project" value="UniProtKB-UniRule"/>
</dbReference>
<dbReference type="GO" id="GO:0019674">
    <property type="term" value="P:NAD metabolic process"/>
    <property type="evidence" value="ECO:0007669"/>
    <property type="project" value="InterPro"/>
</dbReference>
<dbReference type="GO" id="GO:0006741">
    <property type="term" value="P:NADP biosynthetic process"/>
    <property type="evidence" value="ECO:0007669"/>
    <property type="project" value="UniProtKB-UniRule"/>
</dbReference>
<dbReference type="Gene3D" id="3.40.50.10330">
    <property type="entry name" value="Probable inorganic polyphosphate/atp-NAD kinase, domain 1"/>
    <property type="match status" value="1"/>
</dbReference>
<dbReference type="Gene3D" id="2.60.200.30">
    <property type="entry name" value="Probable inorganic polyphosphate/atp-NAD kinase, domain 2"/>
    <property type="match status" value="1"/>
</dbReference>
<dbReference type="HAMAP" id="MF_00361">
    <property type="entry name" value="NAD_kinase"/>
    <property type="match status" value="1"/>
</dbReference>
<dbReference type="InterPro" id="IPR017438">
    <property type="entry name" value="ATP-NAD_kinase_N"/>
</dbReference>
<dbReference type="InterPro" id="IPR017437">
    <property type="entry name" value="ATP-NAD_kinase_PpnK-typ_C"/>
</dbReference>
<dbReference type="InterPro" id="IPR016064">
    <property type="entry name" value="NAD/diacylglycerol_kinase_sf"/>
</dbReference>
<dbReference type="InterPro" id="IPR002504">
    <property type="entry name" value="NADK"/>
</dbReference>
<dbReference type="NCBIfam" id="NF002731">
    <property type="entry name" value="PRK02645.1"/>
    <property type="match status" value="1"/>
</dbReference>
<dbReference type="PANTHER" id="PTHR20275">
    <property type="entry name" value="NAD KINASE"/>
    <property type="match status" value="1"/>
</dbReference>
<dbReference type="PANTHER" id="PTHR20275:SF0">
    <property type="entry name" value="NAD KINASE"/>
    <property type="match status" value="1"/>
</dbReference>
<dbReference type="Pfam" id="PF01513">
    <property type="entry name" value="NAD_kinase"/>
    <property type="match status" value="1"/>
</dbReference>
<dbReference type="Pfam" id="PF20143">
    <property type="entry name" value="NAD_kinase_C"/>
    <property type="match status" value="1"/>
</dbReference>
<dbReference type="SUPFAM" id="SSF111331">
    <property type="entry name" value="NAD kinase/diacylglycerol kinase-like"/>
    <property type="match status" value="1"/>
</dbReference>
<protein>
    <recommendedName>
        <fullName evidence="1">NAD kinase 1</fullName>
        <ecNumber evidence="1">2.7.1.23</ecNumber>
    </recommendedName>
    <alternativeName>
        <fullName evidence="1">ATP-dependent NAD kinase 1</fullName>
    </alternativeName>
</protein>
<feature type="chain" id="PRO_0000229674" description="NAD kinase 1">
    <location>
        <begin position="1"/>
        <end position="299"/>
    </location>
</feature>
<feature type="active site" description="Proton acceptor" evidence="1">
    <location>
        <position position="62"/>
    </location>
</feature>
<feature type="binding site" evidence="1">
    <location>
        <begin position="62"/>
        <end position="63"/>
    </location>
    <ligand>
        <name>NAD(+)</name>
        <dbReference type="ChEBI" id="CHEBI:57540"/>
    </ligand>
</feature>
<feature type="binding site" evidence="1">
    <location>
        <position position="67"/>
    </location>
    <ligand>
        <name>NAD(+)</name>
        <dbReference type="ChEBI" id="CHEBI:57540"/>
    </ligand>
</feature>
<feature type="binding site" evidence="1">
    <location>
        <begin position="143"/>
        <end position="144"/>
    </location>
    <ligand>
        <name>NAD(+)</name>
        <dbReference type="ChEBI" id="CHEBI:57540"/>
    </ligand>
</feature>
<feature type="binding site" evidence="1">
    <location>
        <position position="173"/>
    </location>
    <ligand>
        <name>NAD(+)</name>
        <dbReference type="ChEBI" id="CHEBI:57540"/>
    </ligand>
</feature>
<feature type="binding site" evidence="1">
    <location>
        <position position="175"/>
    </location>
    <ligand>
        <name>NAD(+)</name>
        <dbReference type="ChEBI" id="CHEBI:57540"/>
    </ligand>
</feature>
<evidence type="ECO:0000255" key="1">
    <source>
        <dbReference type="HAMAP-Rule" id="MF_00361"/>
    </source>
</evidence>
<gene>
    <name evidence="1" type="primary">nadK1</name>
    <name type="ordered locus">PMM0156</name>
</gene>
<accession>Q7V3C2</accession>
<sequence>MLIIYRSNSLTAKEASIFCNKTLKERNIKSKRIESDFDNNQLENYFYNLAALPDLVIVLGGDGTVLKSANALVNYDIPILSFNIGGNLGFLTQEKDFLFDQSFIKILEKEEFIIDFRNRLHCDVYSNEKNRERKILKSYDALNDFYFKSVEEDISPTNQIQIEIDNEKVNEYKGDGLIISSSTGSTAYSMAAGGPIVHPSINAFVINPICPMSLASRPIIIPDTSKVVIRVVQKNKREIKLWKDGSKCMTIKENDYCEINKVTKPCKMIKFNKSISYYITLIKKLDWKGDLSLKNNQNN</sequence>
<name>NADK1_PROMP</name>
<proteinExistence type="inferred from homology"/>
<reference key="1">
    <citation type="journal article" date="2003" name="Nature">
        <title>Genome divergence in two Prochlorococcus ecotypes reflects oceanic niche differentiation.</title>
        <authorList>
            <person name="Rocap G."/>
            <person name="Larimer F.W."/>
            <person name="Lamerdin J.E."/>
            <person name="Malfatti S."/>
            <person name="Chain P."/>
            <person name="Ahlgren N.A."/>
            <person name="Arellano A."/>
            <person name="Coleman M."/>
            <person name="Hauser L."/>
            <person name="Hess W.R."/>
            <person name="Johnson Z.I."/>
            <person name="Land M.L."/>
            <person name="Lindell D."/>
            <person name="Post A.F."/>
            <person name="Regala W."/>
            <person name="Shah M."/>
            <person name="Shaw S.L."/>
            <person name="Steglich C."/>
            <person name="Sullivan M.B."/>
            <person name="Ting C.S."/>
            <person name="Tolonen A."/>
            <person name="Webb E.A."/>
            <person name="Zinser E.R."/>
            <person name="Chisholm S.W."/>
        </authorList>
    </citation>
    <scope>NUCLEOTIDE SEQUENCE [LARGE SCALE GENOMIC DNA]</scope>
    <source>
        <strain>CCMP1986 / NIES-2087 / MED4</strain>
    </source>
</reference>
<keyword id="KW-0067">ATP-binding</keyword>
<keyword id="KW-0963">Cytoplasm</keyword>
<keyword id="KW-0418">Kinase</keyword>
<keyword id="KW-0520">NAD</keyword>
<keyword id="KW-0521">NADP</keyword>
<keyword id="KW-0547">Nucleotide-binding</keyword>
<keyword id="KW-0808">Transferase</keyword>
<comment type="function">
    <text evidence="1">Involved in the regulation of the intracellular balance of NAD and NADP, and is a key enzyme in the biosynthesis of NADP. Catalyzes specifically the phosphorylation on 2'-hydroxyl of the adenosine moiety of NAD to yield NADP.</text>
</comment>
<comment type="catalytic activity">
    <reaction evidence="1">
        <text>NAD(+) + ATP = ADP + NADP(+) + H(+)</text>
        <dbReference type="Rhea" id="RHEA:18629"/>
        <dbReference type="ChEBI" id="CHEBI:15378"/>
        <dbReference type="ChEBI" id="CHEBI:30616"/>
        <dbReference type="ChEBI" id="CHEBI:57540"/>
        <dbReference type="ChEBI" id="CHEBI:58349"/>
        <dbReference type="ChEBI" id="CHEBI:456216"/>
        <dbReference type="EC" id="2.7.1.23"/>
    </reaction>
</comment>
<comment type="cofactor">
    <cofactor evidence="1">
        <name>a divalent metal cation</name>
        <dbReference type="ChEBI" id="CHEBI:60240"/>
    </cofactor>
</comment>
<comment type="subcellular location">
    <subcellularLocation>
        <location evidence="1">Cytoplasm</location>
    </subcellularLocation>
</comment>
<comment type="similarity">
    <text evidence="1">Belongs to the NAD kinase family.</text>
</comment>